<keyword id="KW-1185">Reference proteome</keyword>
<sequence>MQARVKWVEGLTFLGESASGHQILMDGNSGDKAPSPMEMVLMAAGGCSAIDVVSILQKGRQDVVDCEVKLTSERREEAPRLFTHINLHFIVTGRDLKDAAVARAVDLSAEKYCSVALMLEKAVNITHSYEVVAA</sequence>
<feature type="chain" id="PRO_0000169518" description="Protein YhfA">
    <location>
        <begin position="1"/>
        <end position="134"/>
    </location>
</feature>
<proteinExistence type="predicted"/>
<dbReference type="EMBL" id="AE014075">
    <property type="protein sequence ID" value="AAN82569.1"/>
    <property type="molecule type" value="Genomic_DNA"/>
</dbReference>
<dbReference type="RefSeq" id="WP_001148908.1">
    <property type="nucleotide sequence ID" value="NZ_CP051263.1"/>
</dbReference>
<dbReference type="SMR" id="P0ADX2"/>
<dbReference type="STRING" id="199310.c4131"/>
<dbReference type="KEGG" id="ecc:c4131"/>
<dbReference type="eggNOG" id="COG1765">
    <property type="taxonomic scope" value="Bacteria"/>
</dbReference>
<dbReference type="HOGENOM" id="CLU_114057_1_2_6"/>
<dbReference type="BioCyc" id="ECOL199310:C4131-MONOMER"/>
<dbReference type="Proteomes" id="UP000001410">
    <property type="component" value="Chromosome"/>
</dbReference>
<dbReference type="Gene3D" id="2.20.25.10">
    <property type="match status" value="1"/>
</dbReference>
<dbReference type="Gene3D" id="3.30.300.20">
    <property type="match status" value="1"/>
</dbReference>
<dbReference type="InterPro" id="IPR015946">
    <property type="entry name" value="KH_dom-like_a/b"/>
</dbReference>
<dbReference type="InterPro" id="IPR003718">
    <property type="entry name" value="OsmC/Ohr_fam"/>
</dbReference>
<dbReference type="InterPro" id="IPR036102">
    <property type="entry name" value="OsmC/Ohrsf"/>
</dbReference>
<dbReference type="NCBIfam" id="NF008009">
    <property type="entry name" value="PRK10738.1"/>
    <property type="match status" value="1"/>
</dbReference>
<dbReference type="PANTHER" id="PTHR34352">
    <property type="entry name" value="PROTEIN YHFA"/>
    <property type="match status" value="1"/>
</dbReference>
<dbReference type="PANTHER" id="PTHR34352:SF1">
    <property type="entry name" value="PROTEIN YHFA"/>
    <property type="match status" value="1"/>
</dbReference>
<dbReference type="Pfam" id="PF02566">
    <property type="entry name" value="OsmC"/>
    <property type="match status" value="1"/>
</dbReference>
<dbReference type="SUPFAM" id="SSF82784">
    <property type="entry name" value="OsmC-like"/>
    <property type="match status" value="1"/>
</dbReference>
<reference key="1">
    <citation type="journal article" date="2002" name="Proc. Natl. Acad. Sci. U.S.A.">
        <title>Extensive mosaic structure revealed by the complete genome sequence of uropathogenic Escherichia coli.</title>
        <authorList>
            <person name="Welch R.A."/>
            <person name="Burland V."/>
            <person name="Plunkett G. III"/>
            <person name="Redford P."/>
            <person name="Roesch P."/>
            <person name="Rasko D."/>
            <person name="Buckles E.L."/>
            <person name="Liou S.-R."/>
            <person name="Boutin A."/>
            <person name="Hackett J."/>
            <person name="Stroud D."/>
            <person name="Mayhew G.F."/>
            <person name="Rose D.J."/>
            <person name="Zhou S."/>
            <person name="Schwartz D.C."/>
            <person name="Perna N.T."/>
            <person name="Mobley H.L.T."/>
            <person name="Donnenberg M.S."/>
            <person name="Blattner F.R."/>
        </authorList>
    </citation>
    <scope>NUCLEOTIDE SEQUENCE [LARGE SCALE GENOMIC DNA]</scope>
    <source>
        <strain>CFT073 / ATCC 700928 / UPEC</strain>
    </source>
</reference>
<name>YHFA_ECOL6</name>
<protein>
    <recommendedName>
        <fullName>Protein YhfA</fullName>
    </recommendedName>
</protein>
<gene>
    <name type="primary">yhfA</name>
    <name type="ordered locus">c4131</name>
</gene>
<accession>P0ADX2</accession>
<accession>P24246</accession>
<organism>
    <name type="scientific">Escherichia coli O6:H1 (strain CFT073 / ATCC 700928 / UPEC)</name>
    <dbReference type="NCBI Taxonomy" id="199310"/>
    <lineage>
        <taxon>Bacteria</taxon>
        <taxon>Pseudomonadati</taxon>
        <taxon>Pseudomonadota</taxon>
        <taxon>Gammaproteobacteria</taxon>
        <taxon>Enterobacterales</taxon>
        <taxon>Enterobacteriaceae</taxon>
        <taxon>Escherichia</taxon>
    </lineage>
</organism>